<sequence length="423" mass="49451">MGSTKHWGEWLLNLKLAPAGVFGVAFLARVALVFYGVFQDRTLHVRYTDIDYQVFTDAARFVAEGRSPYLRATYRYTPLLGWLLTPNIYLSELFGKFLFISCDLLTAFLLYRLLLLKGLARRQACGYCVFWLLNPLPMAVSSRGNADSIVASLVLMVLYLIRKRVVACAAVFYGFAVHMKIYPVTYILPITLHLLPDRDNDKSLRQSRYTFQAHLYELLKRLCDRAVLLFVAVAGLTFFALSFGFYYEYGWEFLEHTYFYHLTRRDIRHNFSPYFYMLYLTAESKWSFSLGIAAFLPQFILLSAVSFAYYRDLVFCCFLHTSIFVTFNKVCTSQYFLWYLCLLPLVMPLVRMTWKRAVVLLMLWFIGQALWLAPAYVLEFQGKNTFLFIWLAGLFFLLINSSILIQIISHYKEEPLTERIKYD</sequence>
<keyword id="KW-0256">Endoplasmic reticulum</keyword>
<keyword id="KW-0328">Glycosyltransferase</keyword>
<keyword id="KW-0337">GPI-anchor biosynthesis</keyword>
<keyword id="KW-0472">Membrane</keyword>
<keyword id="KW-1185">Reference proteome</keyword>
<keyword id="KW-0808">Transferase</keyword>
<keyword id="KW-0812">Transmembrane</keyword>
<keyword id="KW-1133">Transmembrane helix</keyword>
<reference key="1">
    <citation type="submission" date="2005-06" db="EMBL/GenBank/DDBJ databases">
        <title>DNA sequences of macaque genes expressed in brain or testis and its evolutionary implications.</title>
        <authorList>
            <consortium name="International consortium for macaque cDNA sequencing and analysis"/>
        </authorList>
    </citation>
    <scope>NUCLEOTIDE SEQUENCE [LARGE SCALE MRNA]</scope>
    <source>
        <tissue>Testis</tissue>
    </source>
</reference>
<protein>
    <recommendedName>
        <fullName evidence="2">GPI alpha-1,4-mannosyltransferase I, catalytic subunit</fullName>
        <ecNumber evidence="2">2.4.1.-</ecNumber>
    </recommendedName>
    <alternativeName>
        <fullName>GPI mannosyltransferase I</fullName>
        <shortName>GPI-MT-I</shortName>
    </alternativeName>
    <alternativeName>
        <fullName>Phosphatidylinositol-glycan biosynthesis class M protein</fullName>
        <shortName>PIG-M</shortName>
    </alternativeName>
</protein>
<evidence type="ECO:0000250" key="1">
    <source>
        <dbReference type="UniProtKB" id="Q9EQY6"/>
    </source>
</evidence>
<evidence type="ECO:0000250" key="2">
    <source>
        <dbReference type="UniProtKB" id="Q9H3S5"/>
    </source>
</evidence>
<evidence type="ECO:0000255" key="3"/>
<evidence type="ECO:0000305" key="4"/>
<gene>
    <name evidence="2" type="primary">PIGM</name>
    <name type="ORF">QtsA-10615</name>
    <name type="ORF">QtsA-10624</name>
</gene>
<comment type="function">
    <text evidence="2">Catalytic subunit of the glycosylphosphatidylinositol-mannosyltransferase I complex which catalyzes the transfer of the first mannose, via an alpha-1,4 bond from a dolichol-phosphate-mannose (Dol-P-Man) to the glucosaminyl acyl phosphatidylinositol (GlcN-(acyl)PI) intermediate to generate alpha-D-Man-(1-&gt;4)-alpha-D-GlcN-(1-&gt;6)-(1-radyl,2-acyl-sn-glycero-3-phospho)-2-acyl-inositol and participates in the sixth step of the glycosylphosphatidylinositol-anchor biosynthesis.</text>
</comment>
<comment type="pathway">
    <text evidence="2">Glycolipid biosynthesis; glycosylphosphatidylinositol-anchor biosynthesis.</text>
</comment>
<comment type="subunit">
    <text evidence="1">Part of the glycosylphosphatidylinositol-mannosyltransferase I complex that is composed of PIGM and PIGX. Interacts with PIGX; PIGX stabilizes PIGM.</text>
</comment>
<comment type="subcellular location">
    <subcellularLocation>
        <location evidence="2">Endoplasmic reticulum membrane</location>
        <topology evidence="2">Multi-pass membrane protein</topology>
    </subcellularLocation>
</comment>
<comment type="similarity">
    <text evidence="4">Belongs to the PIGM family.</text>
</comment>
<accession>Q4R4E1</accession>
<proteinExistence type="evidence at transcript level"/>
<dbReference type="EC" id="2.4.1.-" evidence="2"/>
<dbReference type="EMBL" id="AB178972">
    <property type="protein sequence ID" value="BAE02023.1"/>
    <property type="molecule type" value="mRNA"/>
</dbReference>
<dbReference type="EMBL" id="AB178973">
    <property type="protein sequence ID" value="BAE02024.1"/>
    <property type="molecule type" value="mRNA"/>
</dbReference>
<dbReference type="RefSeq" id="NP_001271052.1">
    <property type="nucleotide sequence ID" value="NM_001284123.1"/>
</dbReference>
<dbReference type="SMR" id="Q4R4E1"/>
<dbReference type="CAZy" id="GT50">
    <property type="family name" value="Glycosyltransferase Family 50"/>
</dbReference>
<dbReference type="eggNOG" id="KOG3893">
    <property type="taxonomic scope" value="Eukaryota"/>
</dbReference>
<dbReference type="UniPathway" id="UPA00196"/>
<dbReference type="Proteomes" id="UP000233100">
    <property type="component" value="Unplaced"/>
</dbReference>
<dbReference type="GO" id="GO:0005789">
    <property type="term" value="C:endoplasmic reticulum membrane"/>
    <property type="evidence" value="ECO:0000250"/>
    <property type="project" value="UniProtKB"/>
</dbReference>
<dbReference type="GO" id="GO:1990529">
    <property type="term" value="C:glycosylphosphatidylinositol-mannosyltransferase I complex"/>
    <property type="evidence" value="ECO:0000250"/>
    <property type="project" value="UniProtKB"/>
</dbReference>
<dbReference type="GO" id="GO:0180041">
    <property type="term" value="F:glycolipid 1,4-alpha-mannosyltransferase activity"/>
    <property type="evidence" value="ECO:0000250"/>
    <property type="project" value="UniProtKB"/>
</dbReference>
<dbReference type="GO" id="GO:0006506">
    <property type="term" value="P:GPI anchor biosynthetic process"/>
    <property type="evidence" value="ECO:0000250"/>
    <property type="project" value="UniProtKB"/>
</dbReference>
<dbReference type="InterPro" id="IPR007704">
    <property type="entry name" value="PIG-M"/>
</dbReference>
<dbReference type="PANTHER" id="PTHR12886:SF0">
    <property type="entry name" value="GPI MANNOSYLTRANSFERASE 1"/>
    <property type="match status" value="1"/>
</dbReference>
<dbReference type="PANTHER" id="PTHR12886">
    <property type="entry name" value="PIG-M MANNOSYLTRANSFERASE"/>
    <property type="match status" value="1"/>
</dbReference>
<dbReference type="Pfam" id="PF05007">
    <property type="entry name" value="Mannosyl_trans"/>
    <property type="match status" value="1"/>
</dbReference>
<name>PIGM_MACFA</name>
<feature type="chain" id="PRO_0000246214" description="GPI alpha-1,4-mannosyltransferase I, catalytic subunit">
    <location>
        <begin position="1"/>
        <end position="423"/>
    </location>
</feature>
<feature type="topological domain" description="Cytoplasmic" evidence="3">
    <location>
        <begin position="1"/>
        <end position="17"/>
    </location>
</feature>
<feature type="transmembrane region" description="Helical" evidence="3">
    <location>
        <begin position="18"/>
        <end position="38"/>
    </location>
</feature>
<feature type="topological domain" description="Lumenal" evidence="3">
    <location>
        <begin position="39"/>
        <end position="79"/>
    </location>
</feature>
<feature type="transmembrane region" description="Helical" evidence="3">
    <location>
        <begin position="80"/>
        <end position="100"/>
    </location>
</feature>
<feature type="topological domain" description="Cytoplasmic" evidence="3">
    <location>
        <begin position="101"/>
        <end position="138"/>
    </location>
</feature>
<feature type="transmembrane region" description="Helical" evidence="3">
    <location>
        <begin position="139"/>
        <end position="161"/>
    </location>
</feature>
<feature type="topological domain" description="Lumenal" evidence="3">
    <location>
        <begin position="162"/>
        <end position="169"/>
    </location>
</feature>
<feature type="transmembrane region" description="Helical" evidence="3">
    <location>
        <begin position="170"/>
        <end position="190"/>
    </location>
</feature>
<feature type="topological domain" description="Cytoplasmic" evidence="3">
    <location>
        <begin position="191"/>
        <end position="225"/>
    </location>
</feature>
<feature type="transmembrane region" description="Helical" evidence="3">
    <location>
        <begin position="226"/>
        <end position="246"/>
    </location>
</feature>
<feature type="topological domain" description="Lumenal" evidence="3">
    <location>
        <begin position="247"/>
        <end position="287"/>
    </location>
</feature>
<feature type="transmembrane region" description="Helical" evidence="3">
    <location>
        <begin position="288"/>
        <end position="308"/>
    </location>
</feature>
<feature type="topological domain" description="Cytoplasmic" evidence="3">
    <location>
        <begin position="309"/>
        <end position="329"/>
    </location>
</feature>
<feature type="transmembrane region" description="Helical" evidence="3">
    <location>
        <begin position="330"/>
        <end position="350"/>
    </location>
</feature>
<feature type="topological domain" description="Lumenal" evidence="3">
    <location>
        <begin position="351"/>
        <end position="357"/>
    </location>
</feature>
<feature type="transmembrane region" description="Helical" evidence="3">
    <location>
        <begin position="358"/>
        <end position="378"/>
    </location>
</feature>
<feature type="topological domain" description="Cytoplasmic" evidence="3">
    <location>
        <begin position="379"/>
        <end position="384"/>
    </location>
</feature>
<feature type="transmembrane region" description="Helical" evidence="3">
    <location>
        <begin position="385"/>
        <end position="405"/>
    </location>
</feature>
<feature type="topological domain" description="Lumenal" evidence="3">
    <location>
        <begin position="406"/>
        <end position="423"/>
    </location>
</feature>
<organism>
    <name type="scientific">Macaca fascicularis</name>
    <name type="common">Crab-eating macaque</name>
    <name type="synonym">Cynomolgus monkey</name>
    <dbReference type="NCBI Taxonomy" id="9541"/>
    <lineage>
        <taxon>Eukaryota</taxon>
        <taxon>Metazoa</taxon>
        <taxon>Chordata</taxon>
        <taxon>Craniata</taxon>
        <taxon>Vertebrata</taxon>
        <taxon>Euteleostomi</taxon>
        <taxon>Mammalia</taxon>
        <taxon>Eutheria</taxon>
        <taxon>Euarchontoglires</taxon>
        <taxon>Primates</taxon>
        <taxon>Haplorrhini</taxon>
        <taxon>Catarrhini</taxon>
        <taxon>Cercopithecidae</taxon>
        <taxon>Cercopithecinae</taxon>
        <taxon>Macaca</taxon>
    </lineage>
</organism>